<name>RIMM_PARS2</name>
<accession>A8L5A4</accession>
<reference key="1">
    <citation type="journal article" date="2007" name="Genome Res.">
        <title>Genome characteristics of facultatively symbiotic Frankia sp. strains reflect host range and host plant biogeography.</title>
        <authorList>
            <person name="Normand P."/>
            <person name="Lapierre P."/>
            <person name="Tisa L.S."/>
            <person name="Gogarten J.P."/>
            <person name="Alloisio N."/>
            <person name="Bagnarol E."/>
            <person name="Bassi C.A."/>
            <person name="Berry A.M."/>
            <person name="Bickhart D.M."/>
            <person name="Choisne N."/>
            <person name="Couloux A."/>
            <person name="Cournoyer B."/>
            <person name="Cruveiller S."/>
            <person name="Daubin V."/>
            <person name="Demange N."/>
            <person name="Francino M.P."/>
            <person name="Goltsman E."/>
            <person name="Huang Y."/>
            <person name="Kopp O.R."/>
            <person name="Labarre L."/>
            <person name="Lapidus A."/>
            <person name="Lavire C."/>
            <person name="Marechal J."/>
            <person name="Martinez M."/>
            <person name="Mastronunzio J.E."/>
            <person name="Mullin B.C."/>
            <person name="Niemann J."/>
            <person name="Pujic P."/>
            <person name="Rawnsley T."/>
            <person name="Rouy Z."/>
            <person name="Schenowitz C."/>
            <person name="Sellstedt A."/>
            <person name="Tavares F."/>
            <person name="Tomkins J.P."/>
            <person name="Vallenet D."/>
            <person name="Valverde C."/>
            <person name="Wall L.G."/>
            <person name="Wang Y."/>
            <person name="Medigue C."/>
            <person name="Benson D.R."/>
        </authorList>
    </citation>
    <scope>NUCLEOTIDE SEQUENCE [LARGE SCALE GENOMIC DNA]</scope>
    <source>
        <strain>EAN1pec</strain>
    </source>
</reference>
<proteinExistence type="inferred from homology"/>
<feature type="chain" id="PRO_0000351759" description="Ribosome maturation factor RimM">
    <location>
        <begin position="1"/>
        <end position="218"/>
    </location>
</feature>
<feature type="domain" description="PRC barrel" evidence="1">
    <location>
        <begin position="141"/>
        <end position="214"/>
    </location>
</feature>
<protein>
    <recommendedName>
        <fullName evidence="1">Ribosome maturation factor RimM</fullName>
    </recommendedName>
</protein>
<gene>
    <name evidence="1" type="primary">rimM</name>
    <name type="ordered locus">Franean1_1150</name>
</gene>
<dbReference type="EMBL" id="CP000820">
    <property type="protein sequence ID" value="ABW10604.1"/>
    <property type="status" value="ALT_INIT"/>
    <property type="molecule type" value="Genomic_DNA"/>
</dbReference>
<dbReference type="RefSeq" id="WP_041253725.1">
    <property type="nucleotide sequence ID" value="NC_009921.1"/>
</dbReference>
<dbReference type="SMR" id="A8L5A4"/>
<dbReference type="STRING" id="298653.Franean1_1150"/>
<dbReference type="KEGG" id="fre:Franean1_1150"/>
<dbReference type="eggNOG" id="COG0806">
    <property type="taxonomic scope" value="Bacteria"/>
</dbReference>
<dbReference type="HOGENOM" id="CLU_077636_0_0_11"/>
<dbReference type="GO" id="GO:0005737">
    <property type="term" value="C:cytoplasm"/>
    <property type="evidence" value="ECO:0007669"/>
    <property type="project" value="UniProtKB-SubCell"/>
</dbReference>
<dbReference type="GO" id="GO:0005840">
    <property type="term" value="C:ribosome"/>
    <property type="evidence" value="ECO:0007669"/>
    <property type="project" value="InterPro"/>
</dbReference>
<dbReference type="GO" id="GO:0043022">
    <property type="term" value="F:ribosome binding"/>
    <property type="evidence" value="ECO:0007669"/>
    <property type="project" value="InterPro"/>
</dbReference>
<dbReference type="GO" id="GO:0042274">
    <property type="term" value="P:ribosomal small subunit biogenesis"/>
    <property type="evidence" value="ECO:0007669"/>
    <property type="project" value="UniProtKB-UniRule"/>
</dbReference>
<dbReference type="GO" id="GO:0006364">
    <property type="term" value="P:rRNA processing"/>
    <property type="evidence" value="ECO:0007669"/>
    <property type="project" value="UniProtKB-UniRule"/>
</dbReference>
<dbReference type="Gene3D" id="2.30.30.240">
    <property type="entry name" value="PRC-barrel domain"/>
    <property type="match status" value="1"/>
</dbReference>
<dbReference type="Gene3D" id="2.40.30.60">
    <property type="entry name" value="RimM"/>
    <property type="match status" value="1"/>
</dbReference>
<dbReference type="HAMAP" id="MF_00014">
    <property type="entry name" value="Ribosome_mat_RimM"/>
    <property type="match status" value="1"/>
</dbReference>
<dbReference type="InterPro" id="IPR011033">
    <property type="entry name" value="PRC_barrel-like_sf"/>
</dbReference>
<dbReference type="InterPro" id="IPR056792">
    <property type="entry name" value="PRC_RimM"/>
</dbReference>
<dbReference type="InterPro" id="IPR011961">
    <property type="entry name" value="RimM"/>
</dbReference>
<dbReference type="InterPro" id="IPR002676">
    <property type="entry name" value="RimM_N"/>
</dbReference>
<dbReference type="InterPro" id="IPR036976">
    <property type="entry name" value="RimM_N_sf"/>
</dbReference>
<dbReference type="InterPro" id="IPR009000">
    <property type="entry name" value="Transl_B-barrel_sf"/>
</dbReference>
<dbReference type="NCBIfam" id="TIGR02273">
    <property type="entry name" value="16S_RimM"/>
    <property type="match status" value="1"/>
</dbReference>
<dbReference type="PANTHER" id="PTHR33692">
    <property type="entry name" value="RIBOSOME MATURATION FACTOR RIMM"/>
    <property type="match status" value="1"/>
</dbReference>
<dbReference type="PANTHER" id="PTHR33692:SF1">
    <property type="entry name" value="RIBOSOME MATURATION FACTOR RIMM"/>
    <property type="match status" value="1"/>
</dbReference>
<dbReference type="Pfam" id="PF24986">
    <property type="entry name" value="PRC_RimM"/>
    <property type="match status" value="1"/>
</dbReference>
<dbReference type="Pfam" id="PF01782">
    <property type="entry name" value="RimM"/>
    <property type="match status" value="2"/>
</dbReference>
<dbReference type="SUPFAM" id="SSF50346">
    <property type="entry name" value="PRC-barrel domain"/>
    <property type="match status" value="1"/>
</dbReference>
<dbReference type="SUPFAM" id="SSF50447">
    <property type="entry name" value="Translation proteins"/>
    <property type="match status" value="2"/>
</dbReference>
<comment type="function">
    <text evidence="1">An accessory protein needed during the final step in the assembly of 30S ribosomal subunit, possibly for assembly of the head region. Essential for efficient processing of 16S rRNA. May be needed both before and after RbfA during the maturation of 16S rRNA. It has affinity for free ribosomal 30S subunits but not for 70S ribosomes.</text>
</comment>
<comment type="subunit">
    <text evidence="1">Binds ribosomal protein uS19.</text>
</comment>
<comment type="subcellular location">
    <subcellularLocation>
        <location evidence="1">Cytoplasm</location>
    </subcellularLocation>
</comment>
<comment type="domain">
    <text evidence="1">The PRC barrel domain binds ribosomal protein uS19.</text>
</comment>
<comment type="similarity">
    <text evidence="1">Belongs to the RimM family.</text>
</comment>
<comment type="sequence caution" evidence="2">
    <conflict type="erroneous initiation">
        <sequence resource="EMBL-CDS" id="ABW10604"/>
    </conflict>
</comment>
<sequence>MGEPVVVGRVGRPHGIRGDVTVDVRTDLPERRFAPGARLVRQVADGPASRPAADAAGAADAVGTAAGPGSAGDSGAARAAGPPVATVLSVVASRWHSGRLLVRFDGVTDRDAAEALRGSFLTIDSDECGPAVDPDDEDDDGELWWDRDLVGLHARTPAGDVLGEVVDVIHSPGGEILAIGRPEGGEYLVPFVREIVPTVDPAAGHIVVDPPPGLLDLD</sequence>
<organism>
    <name type="scientific">Parafrankia sp. (strain EAN1pec)</name>
    <dbReference type="NCBI Taxonomy" id="298653"/>
    <lineage>
        <taxon>Bacteria</taxon>
        <taxon>Bacillati</taxon>
        <taxon>Actinomycetota</taxon>
        <taxon>Actinomycetes</taxon>
        <taxon>Frankiales</taxon>
        <taxon>Frankiaceae</taxon>
        <taxon>Parafrankia</taxon>
    </lineage>
</organism>
<keyword id="KW-0143">Chaperone</keyword>
<keyword id="KW-0963">Cytoplasm</keyword>
<keyword id="KW-0690">Ribosome biogenesis</keyword>
<keyword id="KW-0698">rRNA processing</keyword>
<evidence type="ECO:0000255" key="1">
    <source>
        <dbReference type="HAMAP-Rule" id="MF_00014"/>
    </source>
</evidence>
<evidence type="ECO:0000305" key="2"/>